<keyword id="KW-0963">Cytoplasm</keyword>
<keyword id="KW-0539">Nucleus</keyword>
<keyword id="KW-0833">Ubl conjugation pathway</keyword>
<proteinExistence type="inferred from homology"/>
<evidence type="ECO:0000250" key="1">
    <source>
        <dbReference type="UniProtKB" id="Q9BZL1"/>
    </source>
</evidence>
<feature type="chain" id="PRO_0000114869" description="Ubiquitin-like protein 5">
    <location>
        <begin position="1"/>
        <end position="73"/>
    </location>
</feature>
<feature type="domain" description="Ubiquitin-like">
    <location>
        <begin position="1"/>
        <end position="73"/>
    </location>
</feature>
<organism>
    <name type="scientific">Psammomys obesus</name>
    <name type="common">Fat sand rat</name>
    <dbReference type="NCBI Taxonomy" id="48139"/>
    <lineage>
        <taxon>Eukaryota</taxon>
        <taxon>Metazoa</taxon>
        <taxon>Chordata</taxon>
        <taxon>Craniata</taxon>
        <taxon>Vertebrata</taxon>
        <taxon>Euteleostomi</taxon>
        <taxon>Mammalia</taxon>
        <taxon>Eutheria</taxon>
        <taxon>Euarchontoglires</taxon>
        <taxon>Glires</taxon>
        <taxon>Rodentia</taxon>
        <taxon>Myomorpha</taxon>
        <taxon>Muroidea</taxon>
        <taxon>Muridae</taxon>
        <taxon>Gerbillinae</taxon>
        <taxon>Psammomys</taxon>
    </lineage>
</organism>
<comment type="function">
    <text evidence="1">Ubiquitin-like protein that plays a role in cell proliferation and sister chromatid cohesion by associating with spliceosomal proteins. Participates thereby in pre-mRNA splicing by maintaining spliceosome integrity. Promotes the functional integrity of the Fanconi anemia DNA repair pathway by interacting with FANCI component and subsequently mediating the formation of FANCI homodimers. Also plays a protective role against ER stress-induced apoptosis.</text>
</comment>
<comment type="subunit">
    <text evidence="1">Interacts with CLK1, CLK3 and CLK4. Interacts with coilin/COIL. Interacts with spliceosome components SART1 and EFTUD2. Interacts with FANCI; this interaction promotes FANCI dimerization.</text>
</comment>
<comment type="subcellular location">
    <subcellularLocation>
        <location evidence="1">Cytoplasm</location>
    </subcellularLocation>
    <subcellularLocation>
        <location evidence="1">Nucleus</location>
    </subcellularLocation>
    <subcellularLocation>
        <location evidence="1">Nucleus</location>
        <location evidence="1">Cajal body</location>
    </subcellularLocation>
</comment>
<dbReference type="EMBL" id="AF318186">
    <property type="protein sequence ID" value="AAG34704.1"/>
    <property type="molecule type" value="mRNA"/>
</dbReference>
<dbReference type="BMRB" id="Q791B0"/>
<dbReference type="SMR" id="Q791B0"/>
<dbReference type="OrthoDB" id="3881at2759"/>
<dbReference type="GO" id="GO:0015030">
    <property type="term" value="C:Cajal body"/>
    <property type="evidence" value="ECO:0007669"/>
    <property type="project" value="UniProtKB-SubCell"/>
</dbReference>
<dbReference type="GO" id="GO:0005737">
    <property type="term" value="C:cytoplasm"/>
    <property type="evidence" value="ECO:0007669"/>
    <property type="project" value="UniProtKB-SubCell"/>
</dbReference>
<dbReference type="GO" id="GO:0036211">
    <property type="term" value="P:protein modification process"/>
    <property type="evidence" value="ECO:0007669"/>
    <property type="project" value="InterPro"/>
</dbReference>
<dbReference type="CDD" id="cd01791">
    <property type="entry name" value="Ubl_UBL5"/>
    <property type="match status" value="1"/>
</dbReference>
<dbReference type="FunFam" id="3.10.20.90:FF:000052">
    <property type="entry name" value="Ubiquitin-like protein 5"/>
    <property type="match status" value="1"/>
</dbReference>
<dbReference type="Gene3D" id="3.10.20.90">
    <property type="entry name" value="Phosphatidylinositol 3-kinase Catalytic Subunit, Chain A, domain 1"/>
    <property type="match status" value="1"/>
</dbReference>
<dbReference type="InterPro" id="IPR039732">
    <property type="entry name" value="Hub1/Ubl5"/>
</dbReference>
<dbReference type="InterPro" id="IPR000626">
    <property type="entry name" value="Ubiquitin-like_dom"/>
</dbReference>
<dbReference type="InterPro" id="IPR029071">
    <property type="entry name" value="Ubiquitin-like_domsf"/>
</dbReference>
<dbReference type="PANTHER" id="PTHR13042">
    <property type="entry name" value="UBIQUITIN-LIKE PROTEIN 5"/>
    <property type="match status" value="1"/>
</dbReference>
<dbReference type="Pfam" id="PF00240">
    <property type="entry name" value="ubiquitin"/>
    <property type="match status" value="1"/>
</dbReference>
<dbReference type="SUPFAM" id="SSF54236">
    <property type="entry name" value="Ubiquitin-like"/>
    <property type="match status" value="1"/>
</dbReference>
<protein>
    <recommendedName>
        <fullName>Ubiquitin-like protein 5</fullName>
    </recommendedName>
    <alternativeName>
        <fullName>Beacon protein</fullName>
    </alternativeName>
</protein>
<gene>
    <name type="primary">UBL5</name>
</gene>
<reference key="1">
    <citation type="journal article" date="2000" name="Diabetes">
        <title>Beacon: a novel gene involved in the regulation of energy balance.</title>
        <authorList>
            <person name="Collier G.R."/>
            <person name="McMillan J.S."/>
            <person name="Windmill K."/>
            <person name="Walder K."/>
            <person name="Tenne-Brown J."/>
            <person name="de Silva A."/>
            <person name="Trevaskis J."/>
            <person name="Jones S."/>
            <person name="Morton G.J."/>
            <person name="Lee S."/>
            <person name="Augert G."/>
            <person name="Civitarese A."/>
            <person name="Zimmet P.Z."/>
        </authorList>
    </citation>
    <scope>NUCLEOTIDE SEQUENCE [MRNA]</scope>
    <source>
        <tissue>Hypothalamus</tissue>
    </source>
</reference>
<name>UBL5_PSAOB</name>
<sequence length="73" mass="8547">MIEVVCNDRLGKKVRVKCNTDDTIGDLKKLIAAQTGTRWNKIVLKKWYTIFKDHVSLGDYEIHDGMNLELYYQ</sequence>
<accession>Q791B0</accession>